<reference key="1">
    <citation type="journal article" date="2011" name="J. Bacteriol.">
        <title>Comparative genomics of 28 Salmonella enterica isolates: evidence for CRISPR-mediated adaptive sublineage evolution.</title>
        <authorList>
            <person name="Fricke W.F."/>
            <person name="Mammel M.K."/>
            <person name="McDermott P.F."/>
            <person name="Tartera C."/>
            <person name="White D.G."/>
            <person name="Leclerc J.E."/>
            <person name="Ravel J."/>
            <person name="Cebula T.A."/>
        </authorList>
    </citation>
    <scope>NUCLEOTIDE SEQUENCE [LARGE SCALE GENOMIC DNA]</scope>
    <source>
        <strain>SL483</strain>
    </source>
</reference>
<keyword id="KW-0456">Lyase</keyword>
<keyword id="KW-0460">Magnesium</keyword>
<keyword id="KW-0474">Menaquinone biosynthesis</keyword>
<keyword id="KW-0479">Metal-binding</keyword>
<name>MENC_SALA4</name>
<feature type="chain" id="PRO_1000125578" description="o-succinylbenzoate synthase">
    <location>
        <begin position="1"/>
        <end position="320"/>
    </location>
</feature>
<feature type="active site" description="Proton donor" evidence="1">
    <location>
        <position position="133"/>
    </location>
</feature>
<feature type="active site" description="Proton acceptor" evidence="1">
    <location>
        <position position="235"/>
    </location>
</feature>
<feature type="binding site" evidence="1">
    <location>
        <position position="161"/>
    </location>
    <ligand>
        <name>Mg(2+)</name>
        <dbReference type="ChEBI" id="CHEBI:18420"/>
    </ligand>
</feature>
<feature type="binding site" evidence="1">
    <location>
        <position position="190"/>
    </location>
    <ligand>
        <name>Mg(2+)</name>
        <dbReference type="ChEBI" id="CHEBI:18420"/>
    </ligand>
</feature>
<feature type="binding site" evidence="1">
    <location>
        <position position="213"/>
    </location>
    <ligand>
        <name>Mg(2+)</name>
        <dbReference type="ChEBI" id="CHEBI:18420"/>
    </ligand>
</feature>
<sequence>MRSAQVYRWQIPMDAGVVLRDRRLKTRDGLYVCLRDGEREGWGEISPLPGFSQETWEEAQTALLTWVNDWLQGNEGLPEMPSVAFGASCALAELTGVLPEAADYRAAPLCTGDPDDLVLRLADMPGEKIAKVKVGLYEAVRDGMVVNLLLEAIPDLHLRLDANRAWTPLKAQQFAKYVNPDYRARIAFLEEPCKTRDDSRAFARETGIAIAWDESLREADFTFEAEEGVRAVVIKPTLTGSLDKVREQVAAAHALGLTAVISSSIESSLGLTQLARIAAWLTPGTLPGLDTLHLMQAQQVRPWPGSALPCLKRDELERLL</sequence>
<proteinExistence type="inferred from homology"/>
<comment type="function">
    <text evidence="1">Converts 2-succinyl-6-hydroxy-2,4-cyclohexadiene-1-carboxylate (SHCHC) to 2-succinylbenzoate (OSB).</text>
</comment>
<comment type="catalytic activity">
    <reaction evidence="1">
        <text>(1R,6R)-6-hydroxy-2-succinyl-cyclohexa-2,4-diene-1-carboxylate = 2-succinylbenzoate + H2O</text>
        <dbReference type="Rhea" id="RHEA:10196"/>
        <dbReference type="ChEBI" id="CHEBI:15377"/>
        <dbReference type="ChEBI" id="CHEBI:18325"/>
        <dbReference type="ChEBI" id="CHEBI:58689"/>
        <dbReference type="EC" id="4.2.1.113"/>
    </reaction>
</comment>
<comment type="cofactor">
    <cofactor evidence="1">
        <name>a divalent metal cation</name>
        <dbReference type="ChEBI" id="CHEBI:60240"/>
    </cofactor>
</comment>
<comment type="pathway">
    <text evidence="1">Quinol/quinone metabolism; 1,4-dihydroxy-2-naphthoate biosynthesis; 1,4-dihydroxy-2-naphthoate from chorismate: step 4/7.</text>
</comment>
<comment type="pathway">
    <text evidence="1">Quinol/quinone metabolism; menaquinone biosynthesis.</text>
</comment>
<comment type="similarity">
    <text evidence="1">Belongs to the mandelate racemase/muconate lactonizing enzyme family. MenC type 1 subfamily.</text>
</comment>
<evidence type="ECO:0000255" key="1">
    <source>
        <dbReference type="HAMAP-Rule" id="MF_00470"/>
    </source>
</evidence>
<gene>
    <name evidence="1" type="primary">menC</name>
    <name type="ordered locus">SeAg_B2442</name>
</gene>
<organism>
    <name type="scientific">Salmonella agona (strain SL483)</name>
    <dbReference type="NCBI Taxonomy" id="454166"/>
    <lineage>
        <taxon>Bacteria</taxon>
        <taxon>Pseudomonadati</taxon>
        <taxon>Pseudomonadota</taxon>
        <taxon>Gammaproteobacteria</taxon>
        <taxon>Enterobacterales</taxon>
        <taxon>Enterobacteriaceae</taxon>
        <taxon>Salmonella</taxon>
    </lineage>
</organism>
<accession>B5EZI5</accession>
<protein>
    <recommendedName>
        <fullName evidence="1">o-succinylbenzoate synthase</fullName>
        <shortName evidence="1">OSB synthase</shortName>
        <shortName evidence="1">OSBS</shortName>
        <ecNumber evidence="1">4.2.1.113</ecNumber>
    </recommendedName>
    <alternativeName>
        <fullName evidence="1">4-(2'-carboxyphenyl)-4-oxybutyric acid synthase</fullName>
    </alternativeName>
    <alternativeName>
        <fullName evidence="1">o-succinylbenzoic acid synthase</fullName>
    </alternativeName>
</protein>
<dbReference type="EC" id="4.2.1.113" evidence="1"/>
<dbReference type="EMBL" id="CP001138">
    <property type="protein sequence ID" value="ACH52020.1"/>
    <property type="molecule type" value="Genomic_DNA"/>
</dbReference>
<dbReference type="RefSeq" id="WP_001255553.1">
    <property type="nucleotide sequence ID" value="NC_011149.1"/>
</dbReference>
<dbReference type="SMR" id="B5EZI5"/>
<dbReference type="KEGG" id="sea:SeAg_B2442"/>
<dbReference type="HOGENOM" id="CLU_030273_0_1_6"/>
<dbReference type="UniPathway" id="UPA00079"/>
<dbReference type="UniPathway" id="UPA01057">
    <property type="reaction ID" value="UER00165"/>
</dbReference>
<dbReference type="Proteomes" id="UP000008819">
    <property type="component" value="Chromosome"/>
</dbReference>
<dbReference type="GO" id="GO:0000287">
    <property type="term" value="F:magnesium ion binding"/>
    <property type="evidence" value="ECO:0007669"/>
    <property type="project" value="UniProtKB-UniRule"/>
</dbReference>
<dbReference type="GO" id="GO:0043748">
    <property type="term" value="F:O-succinylbenzoate synthase activity"/>
    <property type="evidence" value="ECO:0007669"/>
    <property type="project" value="UniProtKB-EC"/>
</dbReference>
<dbReference type="GO" id="GO:0009234">
    <property type="term" value="P:menaquinone biosynthetic process"/>
    <property type="evidence" value="ECO:0007669"/>
    <property type="project" value="UniProtKB-UniRule"/>
</dbReference>
<dbReference type="CDD" id="cd03320">
    <property type="entry name" value="OSBS"/>
    <property type="match status" value="1"/>
</dbReference>
<dbReference type="FunFam" id="3.20.20.120:FF:000006">
    <property type="entry name" value="o-succinylbenzoate synthase"/>
    <property type="match status" value="1"/>
</dbReference>
<dbReference type="Gene3D" id="3.20.20.120">
    <property type="entry name" value="Enolase-like C-terminal domain"/>
    <property type="match status" value="1"/>
</dbReference>
<dbReference type="Gene3D" id="3.30.390.10">
    <property type="entry name" value="Enolase-like, N-terminal domain"/>
    <property type="match status" value="1"/>
</dbReference>
<dbReference type="HAMAP" id="MF_00470">
    <property type="entry name" value="MenC_1"/>
    <property type="match status" value="1"/>
</dbReference>
<dbReference type="InterPro" id="IPR036849">
    <property type="entry name" value="Enolase-like_C_sf"/>
</dbReference>
<dbReference type="InterPro" id="IPR029017">
    <property type="entry name" value="Enolase-like_N"/>
</dbReference>
<dbReference type="InterPro" id="IPR029065">
    <property type="entry name" value="Enolase_C-like"/>
</dbReference>
<dbReference type="InterPro" id="IPR013342">
    <property type="entry name" value="Mandelate_racemase_C"/>
</dbReference>
<dbReference type="InterPro" id="IPR010196">
    <property type="entry name" value="OSB_synthase_MenC1"/>
</dbReference>
<dbReference type="InterPro" id="IPR041338">
    <property type="entry name" value="OSBS_N"/>
</dbReference>
<dbReference type="NCBIfam" id="TIGR01927">
    <property type="entry name" value="menC_gam_Gplu"/>
    <property type="match status" value="1"/>
</dbReference>
<dbReference type="NCBIfam" id="NF003473">
    <property type="entry name" value="PRK05105.1"/>
    <property type="match status" value="1"/>
</dbReference>
<dbReference type="PANTHER" id="PTHR48073:SF2">
    <property type="entry name" value="O-SUCCINYLBENZOATE SYNTHASE"/>
    <property type="match status" value="1"/>
</dbReference>
<dbReference type="PANTHER" id="PTHR48073">
    <property type="entry name" value="O-SUCCINYLBENZOATE SYNTHASE-RELATED"/>
    <property type="match status" value="1"/>
</dbReference>
<dbReference type="Pfam" id="PF21508">
    <property type="entry name" value="MenC_N"/>
    <property type="match status" value="1"/>
</dbReference>
<dbReference type="Pfam" id="PF13378">
    <property type="entry name" value="MR_MLE_C"/>
    <property type="match status" value="1"/>
</dbReference>
<dbReference type="SFLD" id="SFLDG00180">
    <property type="entry name" value="muconate_cycloisomerase"/>
    <property type="match status" value="1"/>
</dbReference>
<dbReference type="SFLD" id="SFLDF00009">
    <property type="entry name" value="o-succinylbenzoate_synthase"/>
    <property type="match status" value="1"/>
</dbReference>
<dbReference type="SMART" id="SM00922">
    <property type="entry name" value="MR_MLE"/>
    <property type="match status" value="1"/>
</dbReference>
<dbReference type="SUPFAM" id="SSF51604">
    <property type="entry name" value="Enolase C-terminal domain-like"/>
    <property type="match status" value="1"/>
</dbReference>
<dbReference type="SUPFAM" id="SSF54826">
    <property type="entry name" value="Enolase N-terminal domain-like"/>
    <property type="match status" value="1"/>
</dbReference>